<evidence type="ECO:0000255" key="1">
    <source>
        <dbReference type="HAMAP-Rule" id="MF_00346"/>
    </source>
</evidence>
<reference key="1">
    <citation type="journal article" date="2009" name="PLoS Genet.">
        <title>Organised genome dynamics in the Escherichia coli species results in highly diverse adaptive paths.</title>
        <authorList>
            <person name="Touchon M."/>
            <person name="Hoede C."/>
            <person name="Tenaillon O."/>
            <person name="Barbe V."/>
            <person name="Baeriswyl S."/>
            <person name="Bidet P."/>
            <person name="Bingen E."/>
            <person name="Bonacorsi S."/>
            <person name="Bouchier C."/>
            <person name="Bouvet O."/>
            <person name="Calteau A."/>
            <person name="Chiapello H."/>
            <person name="Clermont O."/>
            <person name="Cruveiller S."/>
            <person name="Danchin A."/>
            <person name="Diard M."/>
            <person name="Dossat C."/>
            <person name="Karoui M.E."/>
            <person name="Frapy E."/>
            <person name="Garry L."/>
            <person name="Ghigo J.M."/>
            <person name="Gilles A.M."/>
            <person name="Johnson J."/>
            <person name="Le Bouguenec C."/>
            <person name="Lescat M."/>
            <person name="Mangenot S."/>
            <person name="Martinez-Jehanne V."/>
            <person name="Matic I."/>
            <person name="Nassif X."/>
            <person name="Oztas S."/>
            <person name="Petit M.A."/>
            <person name="Pichon C."/>
            <person name="Rouy Z."/>
            <person name="Ruf C.S."/>
            <person name="Schneider D."/>
            <person name="Tourret J."/>
            <person name="Vacherie B."/>
            <person name="Vallenet D."/>
            <person name="Medigue C."/>
            <person name="Rocha E.P.C."/>
            <person name="Denamur E."/>
        </authorList>
    </citation>
    <scope>NUCLEOTIDE SEQUENCE [LARGE SCALE GENOMIC DNA]</scope>
    <source>
        <strain>IAI1</strain>
    </source>
</reference>
<name>YGFB_ECO8A</name>
<gene>
    <name evidence="1" type="primary">ygfB</name>
    <name type="ordered locus">ECIAI1_3028</name>
</gene>
<organism>
    <name type="scientific">Escherichia coli O8 (strain IAI1)</name>
    <dbReference type="NCBI Taxonomy" id="585034"/>
    <lineage>
        <taxon>Bacteria</taxon>
        <taxon>Pseudomonadati</taxon>
        <taxon>Pseudomonadota</taxon>
        <taxon>Gammaproteobacteria</taxon>
        <taxon>Enterobacterales</taxon>
        <taxon>Enterobacteriaceae</taxon>
        <taxon>Escherichia</taxon>
    </lineage>
</organism>
<sequence>MSIQNEMPGYNEMNQYLNQQGTGLTPAEMHGLISGMICGGNDDSSWLPLLHDLTNEGMAFGHELAQALRKMHSATSDALQDDGFLFQLYLPDGDDVSVFDRADALAGWVNHFLLGLGVTQPKLDKVTGETGEAIDDLRNIAQLGYDEDEDQEELEMSLEEIIEYVRVAALLCHDTFTHPQPTAPEVQKPTLH</sequence>
<comment type="similarity">
    <text evidence="1">Belongs to the UPF0149 family.</text>
</comment>
<dbReference type="EMBL" id="CU928160">
    <property type="protein sequence ID" value="CAQ99843.1"/>
    <property type="molecule type" value="Genomic_DNA"/>
</dbReference>
<dbReference type="RefSeq" id="WP_001295378.1">
    <property type="nucleotide sequence ID" value="NC_011741.1"/>
</dbReference>
<dbReference type="SMR" id="B7LYH3"/>
<dbReference type="GeneID" id="93779092"/>
<dbReference type="KEGG" id="ecr:ECIAI1_3028"/>
<dbReference type="HOGENOM" id="CLU_085336_1_0_6"/>
<dbReference type="GO" id="GO:0005829">
    <property type="term" value="C:cytosol"/>
    <property type="evidence" value="ECO:0007669"/>
    <property type="project" value="TreeGrafter"/>
</dbReference>
<dbReference type="FunFam" id="1.20.120.740:FF:000001">
    <property type="entry name" value="UPF0149 protein YgfB"/>
    <property type="match status" value="1"/>
</dbReference>
<dbReference type="Gene3D" id="1.20.120.740">
    <property type="entry name" value="YgfB uncharacterised protein family UPF0149, PF03695"/>
    <property type="match status" value="1"/>
</dbReference>
<dbReference type="HAMAP" id="MF_00346">
    <property type="entry name" value="UPF0149"/>
    <property type="match status" value="1"/>
</dbReference>
<dbReference type="InterPro" id="IPR011978">
    <property type="entry name" value="YgfB-like"/>
</dbReference>
<dbReference type="InterPro" id="IPR036255">
    <property type="entry name" value="YgfB-like_sf"/>
</dbReference>
<dbReference type="NCBIfam" id="NF002477">
    <property type="entry name" value="PRK01736.1"/>
    <property type="match status" value="1"/>
</dbReference>
<dbReference type="NCBIfam" id="TIGR02292">
    <property type="entry name" value="ygfB_yecA"/>
    <property type="match status" value="1"/>
</dbReference>
<dbReference type="PANTHER" id="PTHR37528">
    <property type="entry name" value="UPF0149 PROTEIN YGFB"/>
    <property type="match status" value="1"/>
</dbReference>
<dbReference type="PANTHER" id="PTHR37528:SF1">
    <property type="entry name" value="UPF0149 PROTEIN YGFB"/>
    <property type="match status" value="1"/>
</dbReference>
<dbReference type="Pfam" id="PF03695">
    <property type="entry name" value="UPF0149"/>
    <property type="match status" value="1"/>
</dbReference>
<dbReference type="SUPFAM" id="SSF101327">
    <property type="entry name" value="YgfB-like"/>
    <property type="match status" value="1"/>
</dbReference>
<proteinExistence type="inferred from homology"/>
<protein>
    <recommendedName>
        <fullName evidence="1">UPF0149 protein YgfB</fullName>
    </recommendedName>
</protein>
<feature type="chain" id="PRO_1000120469" description="UPF0149 protein YgfB">
    <location>
        <begin position="1"/>
        <end position="192"/>
    </location>
</feature>
<accession>B7LYH3</accession>